<feature type="chain" id="PRO_0000259536" description="Integrator complex subunit 3">
    <location>
        <begin position="1"/>
        <end position="1043"/>
    </location>
</feature>
<feature type="region of interest" description="Disordered" evidence="2">
    <location>
        <begin position="977"/>
        <end position="1043"/>
    </location>
</feature>
<feature type="compositionally biased region" description="Acidic residues" evidence="2">
    <location>
        <begin position="1008"/>
        <end position="1022"/>
    </location>
</feature>
<feature type="modified residue" description="N-acetylmethionine" evidence="1">
    <location>
        <position position="1"/>
    </location>
</feature>
<feature type="modified residue" description="Phosphoserine" evidence="1">
    <location>
        <position position="502"/>
    </location>
</feature>
<feature type="modified residue" description="Phosphoserine" evidence="1">
    <location>
        <position position="537"/>
    </location>
</feature>
<feature type="modified residue" description="Phosphoserine" evidence="1">
    <location>
        <position position="995"/>
    </location>
</feature>
<protein>
    <recommendedName>
        <fullName>Integrator complex subunit 3</fullName>
        <shortName>Int3</shortName>
    </recommendedName>
    <alternativeName>
        <fullName>SOSS complex subunit A</fullName>
    </alternativeName>
    <alternativeName>
        <fullName>Sensor of single-strand DNA complex subunit A</fullName>
        <shortName>SOSS-A</shortName>
        <shortName>Sensor of ssDNA subunit A</shortName>
    </alternativeName>
</protein>
<organism>
    <name type="scientific">Pongo abelii</name>
    <name type="common">Sumatran orangutan</name>
    <name type="synonym">Pongo pygmaeus abelii</name>
    <dbReference type="NCBI Taxonomy" id="9601"/>
    <lineage>
        <taxon>Eukaryota</taxon>
        <taxon>Metazoa</taxon>
        <taxon>Chordata</taxon>
        <taxon>Craniata</taxon>
        <taxon>Vertebrata</taxon>
        <taxon>Euteleostomi</taxon>
        <taxon>Mammalia</taxon>
        <taxon>Eutheria</taxon>
        <taxon>Euarchontoglires</taxon>
        <taxon>Primates</taxon>
        <taxon>Haplorrhini</taxon>
        <taxon>Catarrhini</taxon>
        <taxon>Hominidae</taxon>
        <taxon>Pongo</taxon>
    </lineage>
</organism>
<accession>Q5RE70</accession>
<dbReference type="EMBL" id="CR857667">
    <property type="protein sequence ID" value="CAH89937.1"/>
    <property type="molecule type" value="mRNA"/>
</dbReference>
<dbReference type="RefSeq" id="NP_001124909.1">
    <property type="nucleotide sequence ID" value="NM_001131437.1"/>
</dbReference>
<dbReference type="SMR" id="Q5RE70"/>
<dbReference type="STRING" id="9601.ENSPPYP00000000932"/>
<dbReference type="GeneID" id="100171777"/>
<dbReference type="KEGG" id="pon:100171777"/>
<dbReference type="CTD" id="65123"/>
<dbReference type="eggNOG" id="KOG4262">
    <property type="taxonomic scope" value="Eukaryota"/>
</dbReference>
<dbReference type="InParanoid" id="Q5RE70"/>
<dbReference type="OrthoDB" id="2021145at2759"/>
<dbReference type="Proteomes" id="UP000001595">
    <property type="component" value="Unplaced"/>
</dbReference>
<dbReference type="GO" id="GO:0005737">
    <property type="term" value="C:cytoplasm"/>
    <property type="evidence" value="ECO:0000250"/>
    <property type="project" value="UniProtKB"/>
</dbReference>
<dbReference type="GO" id="GO:0160232">
    <property type="term" value="C:INTAC complex"/>
    <property type="evidence" value="ECO:0000250"/>
    <property type="project" value="UniProtKB"/>
</dbReference>
<dbReference type="GO" id="GO:0032039">
    <property type="term" value="C:integrator complex"/>
    <property type="evidence" value="ECO:0000250"/>
    <property type="project" value="UniProtKB"/>
</dbReference>
<dbReference type="GO" id="GO:0005634">
    <property type="term" value="C:nucleus"/>
    <property type="evidence" value="ECO:0000250"/>
    <property type="project" value="UniProtKB"/>
</dbReference>
<dbReference type="GO" id="GO:0070876">
    <property type="term" value="C:SOSS complex"/>
    <property type="evidence" value="ECO:0000250"/>
    <property type="project" value="UniProtKB"/>
</dbReference>
<dbReference type="GO" id="GO:0006974">
    <property type="term" value="P:DNA damage response"/>
    <property type="evidence" value="ECO:0000250"/>
    <property type="project" value="UniProtKB"/>
</dbReference>
<dbReference type="GO" id="GO:0006281">
    <property type="term" value="P:DNA repair"/>
    <property type="evidence" value="ECO:0000250"/>
    <property type="project" value="UniProtKB"/>
</dbReference>
<dbReference type="GO" id="GO:0044818">
    <property type="term" value="P:mitotic G2/M transition checkpoint"/>
    <property type="evidence" value="ECO:0000250"/>
    <property type="project" value="UniProtKB"/>
</dbReference>
<dbReference type="GO" id="GO:0010212">
    <property type="term" value="P:response to ionizing radiation"/>
    <property type="evidence" value="ECO:0000250"/>
    <property type="project" value="UniProtKB"/>
</dbReference>
<dbReference type="GO" id="GO:0160240">
    <property type="term" value="P:RNA polymerase II transcription initiation surveillance"/>
    <property type="evidence" value="ECO:0000250"/>
    <property type="project" value="UniProtKB"/>
</dbReference>
<dbReference type="InterPro" id="IPR056518">
    <property type="entry name" value="HEAT_Ints3_C"/>
</dbReference>
<dbReference type="InterPro" id="IPR045334">
    <property type="entry name" value="INTS3"/>
</dbReference>
<dbReference type="InterPro" id="IPR019333">
    <property type="entry name" value="INTS3_N"/>
</dbReference>
<dbReference type="PANTHER" id="PTHR13587">
    <property type="entry name" value="INTEGRATOR COMPLEX SUBUNIT 3"/>
    <property type="match status" value="1"/>
</dbReference>
<dbReference type="PANTHER" id="PTHR13587:SF7">
    <property type="entry name" value="INTEGRATOR COMPLEX SUBUNIT 3"/>
    <property type="match status" value="1"/>
</dbReference>
<dbReference type="Pfam" id="PF24566">
    <property type="entry name" value="HEAT_Ints3_C"/>
    <property type="match status" value="1"/>
</dbReference>
<dbReference type="Pfam" id="PF10189">
    <property type="entry name" value="Ints3_N"/>
    <property type="match status" value="1"/>
</dbReference>
<proteinExistence type="evidence at transcript level"/>
<evidence type="ECO:0000250" key="1">
    <source>
        <dbReference type="UniProtKB" id="Q68E01"/>
    </source>
</evidence>
<evidence type="ECO:0000256" key="2">
    <source>
        <dbReference type="SAM" id="MobiDB-lite"/>
    </source>
</evidence>
<evidence type="ECO:0000305" key="3"/>
<sequence length="1043" mass="118101">MELQKGKGAAAAAAAASGAAGGGGGGAGAGAPGGGRLLLSTSLDAKDELEERLERCMSIVTSMTAGVSEREANDALNAYVCKGLPQHEEICLGLFTLILTEPAQAQKCYRDLALVSRDGMNIVLNKINQILMEKYLKLQDTCRTQLVWLVRELVKSGVLGADGVCMTFMKQIAGGDVTAKNIWLAESVLDILTEQREWVLKSSILIAMAVYTYLRLIVDHHGTAQLQALRQKEVDFCISLLRERFMECLMIGRDLVRLLQNVARIPEFELLWKDIIHNPQALSPQFTGILQLLQSRTSRKFLACRLTPDMETKLLFMTSRVRFGQQKRYQDWFQRQYLSTPDSQSLRCDLIRYICGVVHPSNEVLSSDILPRWAIIGWLLTACTSNVAASNAKLALFYDWLFFSPDKDSIMNIEPAILVMHHSMKPHPAITATLLDFMCRIIPNFYPPLEGHVRQGVFSSLNHIVEKRVLAHLAPLFDNPKLDKELRAMLREKFPEFCSSPSPPVEVKIEEPVSMEMDNHMSDKDESCYDNAEAAFSDDEEDLNSKGKKREFRFHPIKETVVEEPVDITPYLDQLDESLRDKVLQLQKGSDTEAQCEVMQEIVDQVLEEDFDSEQLSVLASCLQELFKAHFRGEVLPEEITEESLEESVGKPLYLIFRNLCQMQEDNSSFSLLLDLLSELYQKQPKIGYHLLYYLRASKAAAGKMNLYESFAQATQLGDLHTCLMMDMKACQEDDVRLLCHLTPSIYTEFPDETLRSGELLNMIVAVIDSAQLQELVCHVMMGNLVMFRKDSVLNILIQSLDWETFEQYCAWQLFLAHNIPLETIIPILQHLKYKEHPEALSCLLLQLRREKPSEEMVKMVLSRPCHPDDQFTTSILRHWCMKHDELLAERIKSLLIKNNSLPRKRQSLRSSSSKLAQLTLEQILEHLDNLRLNLTNTKQNFFSQTPILQALQHVQASCDEAHKMKFSDLFSLAEEYEDSSTKPPKSRRKAALSSPRSRKNATQPPNAEEESGSSSASEEEDTKPKPTKRKRRGSSAVGSDSD</sequence>
<keyword id="KW-0007">Acetylation</keyword>
<keyword id="KW-0963">Cytoplasm</keyword>
<keyword id="KW-0227">DNA damage</keyword>
<keyword id="KW-0234">DNA repair</keyword>
<keyword id="KW-0539">Nucleus</keyword>
<keyword id="KW-0597">Phosphoprotein</keyword>
<keyword id="KW-1185">Reference proteome</keyword>
<comment type="function">
    <text evidence="1">Component of the integrator complex, a multiprotein complex that terminates RNA polymerase II (Pol II) transcription in the promoter-proximal region of genes. The integrator complex provides a quality checkpoint during transcription elongation by driving premature transcription termination of transcripts that are unfavorably configured for transcriptional elongation: the complex terminates transcription by (1) catalyzing dephosphorylation of the C-terminal domain (CTD) of Pol II subunit POLR2A/RPB1 and SUPT5H/SPT5, (2) degrading the exiting nascent RNA transcript via endonuclease activity and (3) promoting the release of Pol II from bound DNA. The integrator complex is also involved in terminating the synthesis of non-coding Pol II transcripts, such as enhancer RNAs (eRNAs), small nuclear RNAs (snRNAs), telomerase RNAs and long non-coding RNAs (lncRNAs). Within the integrator complex, INTS3 is involved in the post-termination step: INTS3 binds INTS7 in the open conformation of integrator complex and prevents the rebinding of Pol II to the integrator after termination cycle. Mediates recruitment of cytoplasmic dynein to the nuclear envelope, probably as component of the integrator complex.</text>
</comment>
<comment type="function">
    <text evidence="1">Component of the SOSS complex, a multiprotein complex that functions downstream of the MRN complex to promote DNA repair and G2/M checkpoint. The SOSS complex associates with single-stranded DNA at DNA lesions and influences diverse endpoints in the cellular DNA damage response including cell-cycle checkpoint activation, recombinational repair and maintenance of genomic stability. The SOSS complex is required for efficient homologous recombination-dependent repair of double-strand breaks (DSBs) and ATM-dependent signaling pathways. In the SOSS complex, it is required for the assembly of the complex and for stabilization of the complex at DNA damage sites.</text>
</comment>
<comment type="subunit">
    <text evidence="1">Component of the Integrator complex, composed of core subunits INTS1, INTS2, INTS3, INTS4, INTS5, INTS6, INTS7, INTS8, INTS9/RC74, INTS10, INTS11/CPSF3L, INTS12, INTS13, INTS14 and INTS15. The core complex associates with protein phosphatase 2A subunits PPP2CA and PPP2R1A, to form the Integrator-PP2A (INTAC) complex. Component of the SOSS complex, composed of SOSS-B (SOSS-B1/NABP2 or SOSS-B2/NABP1), SOSS-A/INTS3 and SOSS-C/INIP. SOSS complexes containing SOSS-B1/NABP2 are more abundant than complexes containing SOSS-B2/NABP1. Interacts with SOSS-B1/NABP2, SOSS-B2/NABP1 and SOSS-C/INIP; the interaction is direct. Interacts with NBN/NBS1.</text>
</comment>
<comment type="subcellular location">
    <subcellularLocation>
        <location evidence="1">Nucleus</location>
    </subcellularLocation>
    <subcellularLocation>
        <location evidence="1">Cytoplasm</location>
    </subcellularLocation>
    <text evidence="1">Localizes to nuclear foci following DNA damage.</text>
</comment>
<comment type="similarity">
    <text evidence="3">Belongs to the Integrator subunit 3 family.</text>
</comment>
<reference key="1">
    <citation type="submission" date="2004-11" db="EMBL/GenBank/DDBJ databases">
        <authorList>
            <consortium name="The German cDNA consortium"/>
        </authorList>
    </citation>
    <scope>NUCLEOTIDE SEQUENCE [LARGE SCALE MRNA]</scope>
    <source>
        <tissue>Kidney</tissue>
    </source>
</reference>
<name>INT3_PONAB</name>
<gene>
    <name type="primary">INTS3</name>
</gene>